<keyword id="KW-0067">ATP-binding</keyword>
<keyword id="KW-0173">Coenzyme A biosynthesis</keyword>
<keyword id="KW-0963">Cytoplasm</keyword>
<keyword id="KW-0418">Kinase</keyword>
<keyword id="KW-0547">Nucleotide-binding</keyword>
<keyword id="KW-1185">Reference proteome</keyword>
<keyword id="KW-0808">Transferase</keyword>
<feature type="chain" id="PRO_0000243323" description="Dephospho-CoA kinase">
    <location>
        <begin position="1"/>
        <end position="230"/>
    </location>
</feature>
<feature type="domain" description="DPCK" evidence="1">
    <location>
        <begin position="26"/>
        <end position="225"/>
    </location>
</feature>
<feature type="region of interest" description="Disordered" evidence="2">
    <location>
        <begin position="1"/>
        <end position="20"/>
    </location>
</feature>
<feature type="binding site" evidence="1">
    <location>
        <begin position="34"/>
        <end position="39"/>
    </location>
    <ligand>
        <name>ATP</name>
        <dbReference type="ChEBI" id="CHEBI:30616"/>
    </ligand>
</feature>
<dbReference type="EC" id="2.7.1.24" evidence="1"/>
<dbReference type="EMBL" id="CP000082">
    <property type="protein sequence ID" value="AAZ17935.1"/>
    <property type="molecule type" value="Genomic_DNA"/>
</dbReference>
<dbReference type="RefSeq" id="WP_011279374.1">
    <property type="nucleotide sequence ID" value="NC_007204.1"/>
</dbReference>
<dbReference type="SMR" id="Q4FVM3"/>
<dbReference type="STRING" id="259536.Psyc_0061"/>
<dbReference type="KEGG" id="par:Psyc_0061"/>
<dbReference type="eggNOG" id="COG0237">
    <property type="taxonomic scope" value="Bacteria"/>
</dbReference>
<dbReference type="HOGENOM" id="CLU_057180_1_2_6"/>
<dbReference type="OrthoDB" id="9812943at2"/>
<dbReference type="UniPathway" id="UPA00241">
    <property type="reaction ID" value="UER00356"/>
</dbReference>
<dbReference type="Proteomes" id="UP000000546">
    <property type="component" value="Chromosome"/>
</dbReference>
<dbReference type="GO" id="GO:0005737">
    <property type="term" value="C:cytoplasm"/>
    <property type="evidence" value="ECO:0007669"/>
    <property type="project" value="UniProtKB-SubCell"/>
</dbReference>
<dbReference type="GO" id="GO:0005524">
    <property type="term" value="F:ATP binding"/>
    <property type="evidence" value="ECO:0007669"/>
    <property type="project" value="UniProtKB-UniRule"/>
</dbReference>
<dbReference type="GO" id="GO:0004140">
    <property type="term" value="F:dephospho-CoA kinase activity"/>
    <property type="evidence" value="ECO:0007669"/>
    <property type="project" value="UniProtKB-UniRule"/>
</dbReference>
<dbReference type="GO" id="GO:0015937">
    <property type="term" value="P:coenzyme A biosynthetic process"/>
    <property type="evidence" value="ECO:0007669"/>
    <property type="project" value="UniProtKB-UniRule"/>
</dbReference>
<dbReference type="CDD" id="cd02022">
    <property type="entry name" value="DPCK"/>
    <property type="match status" value="1"/>
</dbReference>
<dbReference type="Gene3D" id="3.40.50.300">
    <property type="entry name" value="P-loop containing nucleotide triphosphate hydrolases"/>
    <property type="match status" value="1"/>
</dbReference>
<dbReference type="HAMAP" id="MF_00376">
    <property type="entry name" value="Dephospho_CoA_kinase"/>
    <property type="match status" value="1"/>
</dbReference>
<dbReference type="InterPro" id="IPR001977">
    <property type="entry name" value="Depp_CoAkinase"/>
</dbReference>
<dbReference type="InterPro" id="IPR027417">
    <property type="entry name" value="P-loop_NTPase"/>
</dbReference>
<dbReference type="NCBIfam" id="TIGR00152">
    <property type="entry name" value="dephospho-CoA kinase"/>
    <property type="match status" value="1"/>
</dbReference>
<dbReference type="PANTHER" id="PTHR10695:SF46">
    <property type="entry name" value="BIFUNCTIONAL COENZYME A SYNTHASE-RELATED"/>
    <property type="match status" value="1"/>
</dbReference>
<dbReference type="PANTHER" id="PTHR10695">
    <property type="entry name" value="DEPHOSPHO-COA KINASE-RELATED"/>
    <property type="match status" value="1"/>
</dbReference>
<dbReference type="Pfam" id="PF01121">
    <property type="entry name" value="CoaE"/>
    <property type="match status" value="1"/>
</dbReference>
<dbReference type="SUPFAM" id="SSF52540">
    <property type="entry name" value="P-loop containing nucleoside triphosphate hydrolases"/>
    <property type="match status" value="1"/>
</dbReference>
<dbReference type="PROSITE" id="PS51219">
    <property type="entry name" value="DPCK"/>
    <property type="match status" value="1"/>
</dbReference>
<evidence type="ECO:0000255" key="1">
    <source>
        <dbReference type="HAMAP-Rule" id="MF_00376"/>
    </source>
</evidence>
<evidence type="ECO:0000256" key="2">
    <source>
        <dbReference type="SAM" id="MobiDB-lite"/>
    </source>
</evidence>
<comment type="function">
    <text evidence="1">Catalyzes the phosphorylation of the 3'-hydroxyl group of dephosphocoenzyme A to form coenzyme A.</text>
</comment>
<comment type="catalytic activity">
    <reaction evidence="1">
        <text>3'-dephospho-CoA + ATP = ADP + CoA + H(+)</text>
        <dbReference type="Rhea" id="RHEA:18245"/>
        <dbReference type="ChEBI" id="CHEBI:15378"/>
        <dbReference type="ChEBI" id="CHEBI:30616"/>
        <dbReference type="ChEBI" id="CHEBI:57287"/>
        <dbReference type="ChEBI" id="CHEBI:57328"/>
        <dbReference type="ChEBI" id="CHEBI:456216"/>
        <dbReference type="EC" id="2.7.1.24"/>
    </reaction>
</comment>
<comment type="pathway">
    <text evidence="1">Cofactor biosynthesis; coenzyme A biosynthesis; CoA from (R)-pantothenate: step 5/5.</text>
</comment>
<comment type="subcellular location">
    <subcellularLocation>
        <location evidence="1">Cytoplasm</location>
    </subcellularLocation>
</comment>
<comment type="similarity">
    <text evidence="1">Belongs to the CoaE family.</text>
</comment>
<sequence>MSKYAAIPSPYSHQPQAPDHKSKTLVVGLTGGIGSGKSAASNWFAQQGIDIIDADVIAHEVVVKGSATLRKIQRKFGDWVLNINGDMDRAAVRTHVFTYPDALIELEAITHPAIREAAKLQLAESTSPYVVLSAPLLIEAAEAGLANLCQRILVMDATEDTQLARASQRDALSVQKIKAIMVNQLSREERNLHADDVVLNENDLAALYAQLEPLHQDYLKLAQQLKFAAD</sequence>
<reference key="1">
    <citation type="journal article" date="2010" name="Appl. Environ. Microbiol.">
        <title>The genome sequence of Psychrobacter arcticus 273-4, a psychroactive Siberian permafrost bacterium, reveals mechanisms for adaptation to low-temperature growth.</title>
        <authorList>
            <person name="Ayala-del-Rio H.L."/>
            <person name="Chain P.S."/>
            <person name="Grzymski J.J."/>
            <person name="Ponder M.A."/>
            <person name="Ivanova N."/>
            <person name="Bergholz P.W."/>
            <person name="Di Bartolo G."/>
            <person name="Hauser L."/>
            <person name="Land M."/>
            <person name="Bakermans C."/>
            <person name="Rodrigues D."/>
            <person name="Klappenbach J."/>
            <person name="Zarka D."/>
            <person name="Larimer F."/>
            <person name="Richardson P."/>
            <person name="Murray A."/>
            <person name="Thomashow M."/>
            <person name="Tiedje J.M."/>
        </authorList>
    </citation>
    <scope>NUCLEOTIDE SEQUENCE [LARGE SCALE GENOMIC DNA]</scope>
    <source>
        <strain>DSM 17307 / VKM B-2377 / 273-4</strain>
    </source>
</reference>
<accession>Q4FVM3</accession>
<name>COAE_PSYA2</name>
<organism>
    <name type="scientific">Psychrobacter arcticus (strain DSM 17307 / VKM B-2377 / 273-4)</name>
    <dbReference type="NCBI Taxonomy" id="259536"/>
    <lineage>
        <taxon>Bacteria</taxon>
        <taxon>Pseudomonadati</taxon>
        <taxon>Pseudomonadota</taxon>
        <taxon>Gammaproteobacteria</taxon>
        <taxon>Moraxellales</taxon>
        <taxon>Moraxellaceae</taxon>
        <taxon>Psychrobacter</taxon>
    </lineage>
</organism>
<gene>
    <name evidence="1" type="primary">coaE</name>
    <name type="ordered locus">Psyc_0061</name>
</gene>
<protein>
    <recommendedName>
        <fullName evidence="1">Dephospho-CoA kinase</fullName>
        <ecNumber evidence="1">2.7.1.24</ecNumber>
    </recommendedName>
    <alternativeName>
        <fullName evidence="1">Dephosphocoenzyme A kinase</fullName>
    </alternativeName>
</protein>
<proteinExistence type="inferred from homology"/>